<proteinExistence type="inferred from homology"/>
<organism>
    <name type="scientific">Yarrowia lipolytica (strain CLIB 122 / E 150)</name>
    <name type="common">Yeast</name>
    <name type="synonym">Candida lipolytica</name>
    <dbReference type="NCBI Taxonomy" id="284591"/>
    <lineage>
        <taxon>Eukaryota</taxon>
        <taxon>Fungi</taxon>
        <taxon>Dikarya</taxon>
        <taxon>Ascomycota</taxon>
        <taxon>Saccharomycotina</taxon>
        <taxon>Dipodascomycetes</taxon>
        <taxon>Dipodascales</taxon>
        <taxon>Dipodascales incertae sedis</taxon>
        <taxon>Yarrowia</taxon>
    </lineage>
</organism>
<keyword id="KW-0004">4Fe-4S</keyword>
<keyword id="KW-0067">ATP-binding</keyword>
<keyword id="KW-0963">Cytoplasm</keyword>
<keyword id="KW-0408">Iron</keyword>
<keyword id="KW-0411">Iron-sulfur</keyword>
<keyword id="KW-0479">Metal-binding</keyword>
<keyword id="KW-0547">Nucleotide-binding</keyword>
<keyword id="KW-0539">Nucleus</keyword>
<keyword id="KW-1185">Reference proteome</keyword>
<name>NBP35_YARLI</name>
<evidence type="ECO:0000255" key="1">
    <source>
        <dbReference type="HAMAP-Rule" id="MF_03038"/>
    </source>
</evidence>
<evidence type="ECO:0000256" key="2">
    <source>
        <dbReference type="SAM" id="MobiDB-lite"/>
    </source>
</evidence>
<dbReference type="EMBL" id="CR382131">
    <property type="protein sequence ID" value="CAG79035.1"/>
    <property type="molecule type" value="Genomic_DNA"/>
</dbReference>
<dbReference type="RefSeq" id="XP_503456.1">
    <property type="nucleotide sequence ID" value="XM_503456.1"/>
</dbReference>
<dbReference type="SMR" id="Q6C7A6"/>
<dbReference type="FunCoup" id="Q6C7A6">
    <property type="interactions" value="602"/>
</dbReference>
<dbReference type="STRING" id="284591.Q6C7A6"/>
<dbReference type="EnsemblFungi" id="CAG79035">
    <property type="protein sequence ID" value="CAG79035"/>
    <property type="gene ID" value="YALI0_E02354g"/>
</dbReference>
<dbReference type="KEGG" id="yli:2912096"/>
<dbReference type="VEuPathDB" id="FungiDB:YALI0_E02354g"/>
<dbReference type="HOGENOM" id="CLU_024839_0_1_1"/>
<dbReference type="InParanoid" id="Q6C7A6"/>
<dbReference type="OMA" id="VSGCPMR"/>
<dbReference type="OrthoDB" id="103524at4891"/>
<dbReference type="Proteomes" id="UP000001300">
    <property type="component" value="Chromosome E"/>
</dbReference>
<dbReference type="GO" id="GO:0005829">
    <property type="term" value="C:cytosol"/>
    <property type="evidence" value="ECO:0000318"/>
    <property type="project" value="GO_Central"/>
</dbReference>
<dbReference type="GO" id="GO:0005634">
    <property type="term" value="C:nucleus"/>
    <property type="evidence" value="ECO:0007669"/>
    <property type="project" value="UniProtKB-SubCell"/>
</dbReference>
<dbReference type="GO" id="GO:0051539">
    <property type="term" value="F:4 iron, 4 sulfur cluster binding"/>
    <property type="evidence" value="ECO:0007669"/>
    <property type="project" value="UniProtKB-UniRule"/>
</dbReference>
<dbReference type="GO" id="GO:0005524">
    <property type="term" value="F:ATP binding"/>
    <property type="evidence" value="ECO:0007669"/>
    <property type="project" value="UniProtKB-KW"/>
</dbReference>
<dbReference type="GO" id="GO:0140663">
    <property type="term" value="F:ATP-dependent FeS chaperone activity"/>
    <property type="evidence" value="ECO:0007669"/>
    <property type="project" value="InterPro"/>
</dbReference>
<dbReference type="GO" id="GO:0051536">
    <property type="term" value="F:iron-sulfur cluster binding"/>
    <property type="evidence" value="ECO:0000318"/>
    <property type="project" value="GO_Central"/>
</dbReference>
<dbReference type="GO" id="GO:0046872">
    <property type="term" value="F:metal ion binding"/>
    <property type="evidence" value="ECO:0007669"/>
    <property type="project" value="UniProtKB-KW"/>
</dbReference>
<dbReference type="GO" id="GO:0016226">
    <property type="term" value="P:iron-sulfur cluster assembly"/>
    <property type="evidence" value="ECO:0000318"/>
    <property type="project" value="GO_Central"/>
</dbReference>
<dbReference type="CDD" id="cd02037">
    <property type="entry name" value="Mrp_NBP35"/>
    <property type="match status" value="1"/>
</dbReference>
<dbReference type="FunFam" id="3.40.50.300:FF:000427">
    <property type="entry name" value="Cytosolic Fe-S cluster assembly factor NUBP1"/>
    <property type="match status" value="1"/>
</dbReference>
<dbReference type="Gene3D" id="3.40.50.300">
    <property type="entry name" value="P-loop containing nucleotide triphosphate hydrolases"/>
    <property type="match status" value="1"/>
</dbReference>
<dbReference type="HAMAP" id="MF_02040">
    <property type="entry name" value="Mrp_NBP35"/>
    <property type="match status" value="1"/>
</dbReference>
<dbReference type="HAMAP" id="MF_03038">
    <property type="entry name" value="NUBP1"/>
    <property type="match status" value="1"/>
</dbReference>
<dbReference type="InterPro" id="IPR000808">
    <property type="entry name" value="Mrp-like_CS"/>
</dbReference>
<dbReference type="InterPro" id="IPR019591">
    <property type="entry name" value="Mrp/NBP35_ATP-bd"/>
</dbReference>
<dbReference type="InterPro" id="IPR028601">
    <property type="entry name" value="NUBP1/Nbp35"/>
</dbReference>
<dbReference type="InterPro" id="IPR027417">
    <property type="entry name" value="P-loop_NTPase"/>
</dbReference>
<dbReference type="InterPro" id="IPR033756">
    <property type="entry name" value="YlxH/NBP35"/>
</dbReference>
<dbReference type="PANTHER" id="PTHR23264:SF35">
    <property type="entry name" value="CYTOSOLIC FE-S CLUSTER ASSEMBLY FACTOR NUBP1"/>
    <property type="match status" value="1"/>
</dbReference>
<dbReference type="PANTHER" id="PTHR23264">
    <property type="entry name" value="NUCLEOTIDE-BINDING PROTEIN NBP35 YEAST -RELATED"/>
    <property type="match status" value="1"/>
</dbReference>
<dbReference type="Pfam" id="PF10609">
    <property type="entry name" value="ParA"/>
    <property type="match status" value="1"/>
</dbReference>
<dbReference type="SUPFAM" id="SSF52540">
    <property type="entry name" value="P-loop containing nucleoside triphosphate hydrolases"/>
    <property type="match status" value="1"/>
</dbReference>
<dbReference type="PROSITE" id="PS01215">
    <property type="entry name" value="MRP"/>
    <property type="match status" value="1"/>
</dbReference>
<protein>
    <recommendedName>
        <fullName evidence="1">Cytosolic Fe-S cluster assembly factor NBP35</fullName>
    </recommendedName>
    <alternativeName>
        <fullName evidence="1">Nucleotide-binding protein 35</fullName>
    </alternativeName>
</protein>
<accession>Q6C7A6</accession>
<reference key="1">
    <citation type="journal article" date="2004" name="Nature">
        <title>Genome evolution in yeasts.</title>
        <authorList>
            <person name="Dujon B."/>
            <person name="Sherman D."/>
            <person name="Fischer G."/>
            <person name="Durrens P."/>
            <person name="Casaregola S."/>
            <person name="Lafontaine I."/>
            <person name="de Montigny J."/>
            <person name="Marck C."/>
            <person name="Neuveglise C."/>
            <person name="Talla E."/>
            <person name="Goffard N."/>
            <person name="Frangeul L."/>
            <person name="Aigle M."/>
            <person name="Anthouard V."/>
            <person name="Babour A."/>
            <person name="Barbe V."/>
            <person name="Barnay S."/>
            <person name="Blanchin S."/>
            <person name="Beckerich J.-M."/>
            <person name="Beyne E."/>
            <person name="Bleykasten C."/>
            <person name="Boisrame A."/>
            <person name="Boyer J."/>
            <person name="Cattolico L."/>
            <person name="Confanioleri F."/>
            <person name="de Daruvar A."/>
            <person name="Despons L."/>
            <person name="Fabre E."/>
            <person name="Fairhead C."/>
            <person name="Ferry-Dumazet H."/>
            <person name="Groppi A."/>
            <person name="Hantraye F."/>
            <person name="Hennequin C."/>
            <person name="Jauniaux N."/>
            <person name="Joyet P."/>
            <person name="Kachouri R."/>
            <person name="Kerrest A."/>
            <person name="Koszul R."/>
            <person name="Lemaire M."/>
            <person name="Lesur I."/>
            <person name="Ma L."/>
            <person name="Muller H."/>
            <person name="Nicaud J.-M."/>
            <person name="Nikolski M."/>
            <person name="Oztas S."/>
            <person name="Ozier-Kalogeropoulos O."/>
            <person name="Pellenz S."/>
            <person name="Potier S."/>
            <person name="Richard G.-F."/>
            <person name="Straub M.-L."/>
            <person name="Suleau A."/>
            <person name="Swennen D."/>
            <person name="Tekaia F."/>
            <person name="Wesolowski-Louvel M."/>
            <person name="Westhof E."/>
            <person name="Wirth B."/>
            <person name="Zeniou-Meyer M."/>
            <person name="Zivanovic Y."/>
            <person name="Bolotin-Fukuhara M."/>
            <person name="Thierry A."/>
            <person name="Bouchier C."/>
            <person name="Caudron B."/>
            <person name="Scarpelli C."/>
            <person name="Gaillardin C."/>
            <person name="Weissenbach J."/>
            <person name="Wincker P."/>
            <person name="Souciet J.-L."/>
        </authorList>
    </citation>
    <scope>NUCLEOTIDE SEQUENCE [LARGE SCALE GENOMIC DNA]</scope>
    <source>
        <strain>CLIB 122 / E 150</strain>
    </source>
</reference>
<comment type="function">
    <text evidence="1">Component of the cytosolic iron-sulfur (Fe/S) protein assembly (CIA) machinery. Required for maturation of extramitochondrial Fe-S proteins. The NBP35-CFD1 heterotetramer forms a Fe-S scaffold complex, mediating the de novo assembly of an Fe-S cluster and its transfer to target apoproteins. Required for biogenesis and export of both ribosomal subunits, which may reflect a role in assembly of the Fe/S clusters in RLI1, a protein which performs rRNA processing and ribosome export.</text>
</comment>
<comment type="cofactor">
    <cofactor evidence="1">
        <name>[4Fe-4S] cluster</name>
        <dbReference type="ChEBI" id="CHEBI:49883"/>
    </cofactor>
    <text evidence="1">Binds 4 [4Fe-4S] clusters per heterotetramer. Contains two stable clusters in the N-termini of NBP35 and two labile, bridging clusters between subunits of the NBP35-CFD1 heterotetramer.</text>
</comment>
<comment type="subunit">
    <text evidence="1">Heterotetramer of 2 NBP35 and 2 CFD1 chains.</text>
</comment>
<comment type="subcellular location">
    <subcellularLocation>
        <location evidence="1">Cytoplasm</location>
    </subcellularLocation>
    <subcellularLocation>
        <location evidence="1">Nucleus</location>
    </subcellularLocation>
</comment>
<comment type="similarity">
    <text evidence="1">Belongs to the Mrp/NBP35 ATP-binding proteins family. NUBP1/NBP35 subfamily.</text>
</comment>
<gene>
    <name evidence="1" type="primary">NBP35</name>
    <name type="ordered locus">YALI0E02354g</name>
</gene>
<sequence>MPSLVDPVANKTDEGNNRTDLKAPEPEHCPGTESEEAGKADACQGCPNQDICASAPKGPDPDLPLIKDRMKGVKHKILVLSGKGGVGKSTFSSLLGWGFASDLDREVGLMDIDICGPSLPKMMGSEGEQIHTSLSGWSPIYVSDNLGMMSVGFMLPNQDDAIIWRGAKKNGLIKQFLKDVDWGNLDYLVVDTPPGTSDEHLSVTQYLKESGVDGAVVITTPQEVALLDVRKELDFCRKSGIKIIGLVENMSGFVCPNCKGESFIFAPTTGGGKALAEEFNIPFLGSVPLDPRIGKSCDHGESFVEEYPDSPATTAILDVIRQIREAVGDPQEDEDDDMDE</sequence>
<feature type="chain" id="PRO_0000278903" description="Cytosolic Fe-S cluster assembly factor NBP35">
    <location>
        <begin position="1"/>
        <end position="340"/>
    </location>
</feature>
<feature type="region of interest" description="Disordered" evidence="2">
    <location>
        <begin position="1"/>
        <end position="41"/>
    </location>
</feature>
<feature type="compositionally biased region" description="Basic and acidic residues" evidence="2">
    <location>
        <begin position="11"/>
        <end position="30"/>
    </location>
</feature>
<feature type="binding site" evidence="1">
    <location>
        <position position="29"/>
    </location>
    <ligand>
        <name>[4Fe-4S] cluster</name>
        <dbReference type="ChEBI" id="CHEBI:49883"/>
        <label>1</label>
    </ligand>
</feature>
<feature type="binding site" evidence="1">
    <location>
        <position position="43"/>
    </location>
    <ligand>
        <name>[4Fe-4S] cluster</name>
        <dbReference type="ChEBI" id="CHEBI:49883"/>
        <label>1</label>
    </ligand>
</feature>
<feature type="binding site" evidence="1">
    <location>
        <position position="46"/>
    </location>
    <ligand>
        <name>[4Fe-4S] cluster</name>
        <dbReference type="ChEBI" id="CHEBI:49883"/>
        <label>1</label>
    </ligand>
</feature>
<feature type="binding site" evidence="1">
    <location>
        <position position="52"/>
    </location>
    <ligand>
        <name>[4Fe-4S] cluster</name>
        <dbReference type="ChEBI" id="CHEBI:49883"/>
        <label>1</label>
    </ligand>
</feature>
<feature type="binding site" evidence="1">
    <location>
        <begin position="82"/>
        <end position="89"/>
    </location>
    <ligand>
        <name>ATP</name>
        <dbReference type="ChEBI" id="CHEBI:30616"/>
    </ligand>
</feature>
<feature type="binding site" evidence="1">
    <location>
        <position position="255"/>
    </location>
    <ligand>
        <name>[4Fe-4S] cluster</name>
        <dbReference type="ChEBI" id="CHEBI:49883"/>
        <label>2</label>
        <note>ligand shared with heterodimeric partner</note>
    </ligand>
</feature>
<feature type="binding site" evidence="1">
    <location>
        <position position="258"/>
    </location>
    <ligand>
        <name>[4Fe-4S] cluster</name>
        <dbReference type="ChEBI" id="CHEBI:49883"/>
        <label>2</label>
        <note>ligand shared with heterodimeric partner</note>
    </ligand>
</feature>